<keyword id="KW-0963">Cytoplasm</keyword>
<keyword id="KW-0324">Glycolysis</keyword>
<keyword id="KW-0456">Lyase</keyword>
<keyword id="KW-0460">Magnesium</keyword>
<keyword id="KW-0479">Metal-binding</keyword>
<keyword id="KW-1185">Reference proteome</keyword>
<name>ENO2_CANGA</name>
<organism>
    <name type="scientific">Candida glabrata (strain ATCC 2001 / BCRC 20586 / JCM 3761 / NBRC 0622 / NRRL Y-65 / CBS 138)</name>
    <name type="common">Yeast</name>
    <name type="synonym">Nakaseomyces glabratus</name>
    <dbReference type="NCBI Taxonomy" id="284593"/>
    <lineage>
        <taxon>Eukaryota</taxon>
        <taxon>Fungi</taxon>
        <taxon>Dikarya</taxon>
        <taxon>Ascomycota</taxon>
        <taxon>Saccharomycotina</taxon>
        <taxon>Saccharomycetes</taxon>
        <taxon>Saccharomycetales</taxon>
        <taxon>Saccharomycetaceae</taxon>
        <taxon>Nakaseomyces</taxon>
    </lineage>
</organism>
<proteinExistence type="inferred from homology"/>
<dbReference type="EC" id="4.2.1.11"/>
<dbReference type="EMBL" id="CR380955">
    <property type="protein sequence ID" value="CAG60297.1"/>
    <property type="molecule type" value="Genomic_DNA"/>
</dbReference>
<dbReference type="SMR" id="Q6FQY4"/>
<dbReference type="FunCoup" id="Q6FQY4">
    <property type="interactions" value="1358"/>
</dbReference>
<dbReference type="STRING" id="284593.Q6FQY4"/>
<dbReference type="EnsemblFungi" id="CAGL0I02486g-T">
    <property type="protein sequence ID" value="CAGL0I02486g-T-p1"/>
    <property type="gene ID" value="CAGL0I02486g"/>
</dbReference>
<dbReference type="KEGG" id="cgr:2889384"/>
<dbReference type="CGD" id="CAL0130514">
    <property type="gene designation" value="ENO1"/>
</dbReference>
<dbReference type="VEuPathDB" id="FungiDB:B1J91_I02486g"/>
<dbReference type="VEuPathDB" id="FungiDB:CAGL0I02486g"/>
<dbReference type="eggNOG" id="KOG2670">
    <property type="taxonomic scope" value="Eukaryota"/>
</dbReference>
<dbReference type="HOGENOM" id="CLU_031223_0_0_1"/>
<dbReference type="InParanoid" id="Q6FQY4"/>
<dbReference type="OMA" id="RCMMSHR"/>
<dbReference type="UniPathway" id="UPA00109">
    <property type="reaction ID" value="UER00187"/>
</dbReference>
<dbReference type="Proteomes" id="UP000002428">
    <property type="component" value="Chromosome I"/>
</dbReference>
<dbReference type="GO" id="GO:0009986">
    <property type="term" value="C:cell surface"/>
    <property type="evidence" value="ECO:0000314"/>
    <property type="project" value="CGD"/>
</dbReference>
<dbReference type="GO" id="GO:0005829">
    <property type="term" value="C:cytosol"/>
    <property type="evidence" value="ECO:0000314"/>
    <property type="project" value="CGD"/>
</dbReference>
<dbReference type="GO" id="GO:0005576">
    <property type="term" value="C:extracellular region"/>
    <property type="evidence" value="ECO:0000314"/>
    <property type="project" value="CGD"/>
</dbReference>
<dbReference type="GO" id="GO:0000324">
    <property type="term" value="C:fungal-type vacuole"/>
    <property type="evidence" value="ECO:0007669"/>
    <property type="project" value="EnsemblFungi"/>
</dbReference>
<dbReference type="GO" id="GO:0005739">
    <property type="term" value="C:mitochondrion"/>
    <property type="evidence" value="ECO:0007669"/>
    <property type="project" value="EnsemblFungi"/>
</dbReference>
<dbReference type="GO" id="GO:0000015">
    <property type="term" value="C:phosphopyruvate hydratase complex"/>
    <property type="evidence" value="ECO:0007669"/>
    <property type="project" value="EnsemblFungi"/>
</dbReference>
<dbReference type="GO" id="GO:0000287">
    <property type="term" value="F:magnesium ion binding"/>
    <property type="evidence" value="ECO:0007669"/>
    <property type="project" value="InterPro"/>
</dbReference>
<dbReference type="GO" id="GO:1904408">
    <property type="term" value="F:melatonin binding"/>
    <property type="evidence" value="ECO:0007669"/>
    <property type="project" value="EnsemblFungi"/>
</dbReference>
<dbReference type="GO" id="GO:0004634">
    <property type="term" value="F:phosphopyruvate hydratase activity"/>
    <property type="evidence" value="ECO:0007669"/>
    <property type="project" value="UniProtKB-EC"/>
</dbReference>
<dbReference type="GO" id="GO:0006096">
    <property type="term" value="P:glycolytic process"/>
    <property type="evidence" value="ECO:0007669"/>
    <property type="project" value="UniProtKB-UniPathway"/>
</dbReference>
<dbReference type="GO" id="GO:0032889">
    <property type="term" value="P:regulation of vacuole fusion, non-autophagic"/>
    <property type="evidence" value="ECO:0007669"/>
    <property type="project" value="EnsemblFungi"/>
</dbReference>
<dbReference type="CDD" id="cd03313">
    <property type="entry name" value="enolase"/>
    <property type="match status" value="1"/>
</dbReference>
<dbReference type="FunFam" id="3.30.390.10:FF:000001">
    <property type="entry name" value="Enolase"/>
    <property type="match status" value="1"/>
</dbReference>
<dbReference type="FunFam" id="3.20.20.120:FF:000002">
    <property type="entry name" value="Enolase 1"/>
    <property type="match status" value="1"/>
</dbReference>
<dbReference type="Gene3D" id="3.20.20.120">
    <property type="entry name" value="Enolase-like C-terminal domain"/>
    <property type="match status" value="1"/>
</dbReference>
<dbReference type="Gene3D" id="3.30.390.10">
    <property type="entry name" value="Enolase-like, N-terminal domain"/>
    <property type="match status" value="1"/>
</dbReference>
<dbReference type="HAMAP" id="MF_00318">
    <property type="entry name" value="Enolase"/>
    <property type="match status" value="1"/>
</dbReference>
<dbReference type="InterPro" id="IPR000941">
    <property type="entry name" value="Enolase"/>
</dbReference>
<dbReference type="InterPro" id="IPR036849">
    <property type="entry name" value="Enolase-like_C_sf"/>
</dbReference>
<dbReference type="InterPro" id="IPR029017">
    <property type="entry name" value="Enolase-like_N"/>
</dbReference>
<dbReference type="InterPro" id="IPR020810">
    <property type="entry name" value="Enolase_C"/>
</dbReference>
<dbReference type="InterPro" id="IPR020809">
    <property type="entry name" value="Enolase_CS"/>
</dbReference>
<dbReference type="InterPro" id="IPR020811">
    <property type="entry name" value="Enolase_N"/>
</dbReference>
<dbReference type="NCBIfam" id="TIGR01060">
    <property type="entry name" value="eno"/>
    <property type="match status" value="1"/>
</dbReference>
<dbReference type="PANTHER" id="PTHR11902">
    <property type="entry name" value="ENOLASE"/>
    <property type="match status" value="1"/>
</dbReference>
<dbReference type="PANTHER" id="PTHR11902:SF1">
    <property type="entry name" value="ENOLASE"/>
    <property type="match status" value="1"/>
</dbReference>
<dbReference type="Pfam" id="PF00113">
    <property type="entry name" value="Enolase_C"/>
    <property type="match status" value="1"/>
</dbReference>
<dbReference type="Pfam" id="PF03952">
    <property type="entry name" value="Enolase_N"/>
    <property type="match status" value="1"/>
</dbReference>
<dbReference type="PIRSF" id="PIRSF001400">
    <property type="entry name" value="Enolase"/>
    <property type="match status" value="1"/>
</dbReference>
<dbReference type="PRINTS" id="PR00148">
    <property type="entry name" value="ENOLASE"/>
</dbReference>
<dbReference type="SFLD" id="SFLDF00002">
    <property type="entry name" value="enolase"/>
    <property type="match status" value="1"/>
</dbReference>
<dbReference type="SFLD" id="SFLDG00178">
    <property type="entry name" value="enolase"/>
    <property type="match status" value="1"/>
</dbReference>
<dbReference type="SMART" id="SM01192">
    <property type="entry name" value="Enolase_C"/>
    <property type="match status" value="1"/>
</dbReference>
<dbReference type="SMART" id="SM01193">
    <property type="entry name" value="Enolase_N"/>
    <property type="match status" value="1"/>
</dbReference>
<dbReference type="SUPFAM" id="SSF51604">
    <property type="entry name" value="Enolase C-terminal domain-like"/>
    <property type="match status" value="1"/>
</dbReference>
<dbReference type="SUPFAM" id="SSF54826">
    <property type="entry name" value="Enolase N-terminal domain-like"/>
    <property type="match status" value="1"/>
</dbReference>
<dbReference type="PROSITE" id="PS00164">
    <property type="entry name" value="ENOLASE"/>
    <property type="match status" value="1"/>
</dbReference>
<feature type="chain" id="PRO_0000134045" description="Enolase 2">
    <location>
        <begin position="1"/>
        <end position="437"/>
    </location>
</feature>
<feature type="active site" description="Proton donor" evidence="1">
    <location>
        <position position="212"/>
    </location>
</feature>
<feature type="active site" description="Proton acceptor" evidence="1">
    <location>
        <position position="346"/>
    </location>
</feature>
<feature type="binding site" evidence="1">
    <location>
        <position position="160"/>
    </location>
    <ligand>
        <name>substrate</name>
    </ligand>
</feature>
<feature type="binding site" evidence="1">
    <location>
        <position position="169"/>
    </location>
    <ligand>
        <name>substrate</name>
    </ligand>
</feature>
<feature type="binding site" evidence="1">
    <location>
        <position position="247"/>
    </location>
    <ligand>
        <name>Mg(2+)</name>
        <dbReference type="ChEBI" id="CHEBI:18420"/>
    </ligand>
</feature>
<feature type="binding site" evidence="1">
    <location>
        <position position="296"/>
    </location>
    <ligand>
        <name>Mg(2+)</name>
        <dbReference type="ChEBI" id="CHEBI:18420"/>
    </ligand>
</feature>
<feature type="binding site" evidence="1">
    <location>
        <position position="296"/>
    </location>
    <ligand>
        <name>substrate</name>
    </ligand>
</feature>
<feature type="binding site" evidence="1">
    <location>
        <position position="321"/>
    </location>
    <ligand>
        <name>Mg(2+)</name>
        <dbReference type="ChEBI" id="CHEBI:18420"/>
    </ligand>
</feature>
<feature type="binding site" evidence="1">
    <location>
        <position position="321"/>
    </location>
    <ligand>
        <name>substrate</name>
    </ligand>
</feature>
<feature type="binding site" evidence="1">
    <location>
        <begin position="373"/>
        <end position="376"/>
    </location>
    <ligand>
        <name>substrate</name>
    </ligand>
</feature>
<feature type="binding site" evidence="1">
    <location>
        <position position="397"/>
    </location>
    <ligand>
        <name>substrate</name>
    </ligand>
</feature>
<sequence>MAVSKVYARSVYDSRGNPTVEVELTTEKGVFRSIVPSGASTGIHEALEMRDGDKSKWLGKGVENAVKNVNDVIAPAFVKANVDIKDQKAVDDLLLSLDGTANKSKLGANAILGVSMAAARAAAAEKNVPLYQHLADLSDSKTSPFVLPVPFLNVLNGGSHAGGALALQEFMIAPTGAKSFREAMRIGSEVYHNLKSLTKKRYGSSAGNVGDEGGVAPDIQTAEEALDLIVDAIKAAGHEGKVKIGLDCASSEFFKDGKYDLDFKNPNSDASKWLSGPQLADLYHSLVKKYPIVSIEDPFAEDDWEAWSHFFKTAGVQIVADDLTVTNPKRIATAIEKKAADALLLKVNQIGSLSESIKAAQDSFAAGWGVMVSHRSGETEDTFIADLVVGLRTGQIKTGAPARSERLAKLNQLLRIEEELGDKAVYAGDNFHHGFKL</sequence>
<accession>Q6FQY4</accession>
<reference key="1">
    <citation type="journal article" date="2004" name="Nature">
        <title>Genome evolution in yeasts.</title>
        <authorList>
            <person name="Dujon B."/>
            <person name="Sherman D."/>
            <person name="Fischer G."/>
            <person name="Durrens P."/>
            <person name="Casaregola S."/>
            <person name="Lafontaine I."/>
            <person name="de Montigny J."/>
            <person name="Marck C."/>
            <person name="Neuveglise C."/>
            <person name="Talla E."/>
            <person name="Goffard N."/>
            <person name="Frangeul L."/>
            <person name="Aigle M."/>
            <person name="Anthouard V."/>
            <person name="Babour A."/>
            <person name="Barbe V."/>
            <person name="Barnay S."/>
            <person name="Blanchin S."/>
            <person name="Beckerich J.-M."/>
            <person name="Beyne E."/>
            <person name="Bleykasten C."/>
            <person name="Boisrame A."/>
            <person name="Boyer J."/>
            <person name="Cattolico L."/>
            <person name="Confanioleri F."/>
            <person name="de Daruvar A."/>
            <person name="Despons L."/>
            <person name="Fabre E."/>
            <person name="Fairhead C."/>
            <person name="Ferry-Dumazet H."/>
            <person name="Groppi A."/>
            <person name="Hantraye F."/>
            <person name="Hennequin C."/>
            <person name="Jauniaux N."/>
            <person name="Joyet P."/>
            <person name="Kachouri R."/>
            <person name="Kerrest A."/>
            <person name="Koszul R."/>
            <person name="Lemaire M."/>
            <person name="Lesur I."/>
            <person name="Ma L."/>
            <person name="Muller H."/>
            <person name="Nicaud J.-M."/>
            <person name="Nikolski M."/>
            <person name="Oztas S."/>
            <person name="Ozier-Kalogeropoulos O."/>
            <person name="Pellenz S."/>
            <person name="Potier S."/>
            <person name="Richard G.-F."/>
            <person name="Straub M.-L."/>
            <person name="Suleau A."/>
            <person name="Swennen D."/>
            <person name="Tekaia F."/>
            <person name="Wesolowski-Louvel M."/>
            <person name="Westhof E."/>
            <person name="Wirth B."/>
            <person name="Zeniou-Meyer M."/>
            <person name="Zivanovic Y."/>
            <person name="Bolotin-Fukuhara M."/>
            <person name="Thierry A."/>
            <person name="Bouchier C."/>
            <person name="Caudron B."/>
            <person name="Scarpelli C."/>
            <person name="Gaillardin C."/>
            <person name="Weissenbach J."/>
            <person name="Wincker P."/>
            <person name="Souciet J.-L."/>
        </authorList>
    </citation>
    <scope>NUCLEOTIDE SEQUENCE [LARGE SCALE GENOMIC DNA]</scope>
    <source>
        <strain>ATCC 2001 / BCRC 20586 / JCM 3761 / NBRC 0622 / NRRL Y-65 / CBS 138</strain>
    </source>
</reference>
<comment type="catalytic activity">
    <reaction>
        <text>(2R)-2-phosphoglycerate = phosphoenolpyruvate + H2O</text>
        <dbReference type="Rhea" id="RHEA:10164"/>
        <dbReference type="ChEBI" id="CHEBI:15377"/>
        <dbReference type="ChEBI" id="CHEBI:58289"/>
        <dbReference type="ChEBI" id="CHEBI:58702"/>
        <dbReference type="EC" id="4.2.1.11"/>
    </reaction>
</comment>
<comment type="cofactor">
    <cofactor evidence="1">
        <name>Mg(2+)</name>
        <dbReference type="ChEBI" id="CHEBI:18420"/>
    </cofactor>
    <text evidence="1">Mg(2+) is required for catalysis and for stabilizing the dimer.</text>
</comment>
<comment type="pathway">
    <text>Carbohydrate degradation; glycolysis; pyruvate from D-glyceraldehyde 3-phosphate: step 4/5.</text>
</comment>
<comment type="subunit">
    <text evidence="1">Homodimer.</text>
</comment>
<comment type="subcellular location">
    <subcellularLocation>
        <location evidence="1">Cytoplasm</location>
    </subcellularLocation>
</comment>
<comment type="similarity">
    <text evidence="2">Belongs to the enolase family.</text>
</comment>
<gene>
    <name type="primary">ENO2</name>
    <name type="ordered locus">CAGL0I02486g</name>
</gene>
<evidence type="ECO:0000250" key="1"/>
<evidence type="ECO:0000305" key="2"/>
<protein>
    <recommendedName>
        <fullName>Enolase 2</fullName>
        <ecNumber>4.2.1.11</ecNumber>
    </recommendedName>
    <alternativeName>
        <fullName>2-phospho-D-glycerate hydro-lyase 2</fullName>
    </alternativeName>
    <alternativeName>
        <fullName>2-phosphoglycerate dehydratase 2</fullName>
    </alternativeName>
</protein>